<name>RL29_LYSSC</name>
<dbReference type="EMBL" id="CP000817">
    <property type="protein sequence ID" value="ACA42050.1"/>
    <property type="molecule type" value="Genomic_DNA"/>
</dbReference>
<dbReference type="RefSeq" id="WP_004233646.1">
    <property type="nucleotide sequence ID" value="NC_010382.1"/>
</dbReference>
<dbReference type="SMR" id="B1HMX2"/>
<dbReference type="EnsemblBacteria" id="ACA42050">
    <property type="protein sequence ID" value="ACA42050"/>
    <property type="gene ID" value="Bsph_4606"/>
</dbReference>
<dbReference type="GeneID" id="74907557"/>
<dbReference type="KEGG" id="lsp:Bsph_4606"/>
<dbReference type="HOGENOM" id="CLU_158491_5_2_9"/>
<dbReference type="Proteomes" id="UP000002164">
    <property type="component" value="Chromosome"/>
</dbReference>
<dbReference type="GO" id="GO:0022625">
    <property type="term" value="C:cytosolic large ribosomal subunit"/>
    <property type="evidence" value="ECO:0007669"/>
    <property type="project" value="TreeGrafter"/>
</dbReference>
<dbReference type="GO" id="GO:0003735">
    <property type="term" value="F:structural constituent of ribosome"/>
    <property type="evidence" value="ECO:0007669"/>
    <property type="project" value="InterPro"/>
</dbReference>
<dbReference type="GO" id="GO:0006412">
    <property type="term" value="P:translation"/>
    <property type="evidence" value="ECO:0007669"/>
    <property type="project" value="UniProtKB-UniRule"/>
</dbReference>
<dbReference type="CDD" id="cd00427">
    <property type="entry name" value="Ribosomal_L29_HIP"/>
    <property type="match status" value="1"/>
</dbReference>
<dbReference type="FunFam" id="1.10.287.310:FF:000001">
    <property type="entry name" value="50S ribosomal protein L29"/>
    <property type="match status" value="1"/>
</dbReference>
<dbReference type="Gene3D" id="1.10.287.310">
    <property type="match status" value="1"/>
</dbReference>
<dbReference type="HAMAP" id="MF_00374">
    <property type="entry name" value="Ribosomal_uL29"/>
    <property type="match status" value="1"/>
</dbReference>
<dbReference type="InterPro" id="IPR050063">
    <property type="entry name" value="Ribosomal_protein_uL29"/>
</dbReference>
<dbReference type="InterPro" id="IPR001854">
    <property type="entry name" value="Ribosomal_uL29"/>
</dbReference>
<dbReference type="InterPro" id="IPR018254">
    <property type="entry name" value="Ribosomal_uL29_CS"/>
</dbReference>
<dbReference type="InterPro" id="IPR036049">
    <property type="entry name" value="Ribosomal_uL29_sf"/>
</dbReference>
<dbReference type="NCBIfam" id="TIGR00012">
    <property type="entry name" value="L29"/>
    <property type="match status" value="1"/>
</dbReference>
<dbReference type="PANTHER" id="PTHR10916">
    <property type="entry name" value="60S RIBOSOMAL PROTEIN L35/50S RIBOSOMAL PROTEIN L29"/>
    <property type="match status" value="1"/>
</dbReference>
<dbReference type="PANTHER" id="PTHR10916:SF0">
    <property type="entry name" value="LARGE RIBOSOMAL SUBUNIT PROTEIN UL29C"/>
    <property type="match status" value="1"/>
</dbReference>
<dbReference type="Pfam" id="PF00831">
    <property type="entry name" value="Ribosomal_L29"/>
    <property type="match status" value="1"/>
</dbReference>
<dbReference type="SUPFAM" id="SSF46561">
    <property type="entry name" value="Ribosomal protein L29 (L29p)"/>
    <property type="match status" value="1"/>
</dbReference>
<dbReference type="PROSITE" id="PS00579">
    <property type="entry name" value="RIBOSOMAL_L29"/>
    <property type="match status" value="1"/>
</dbReference>
<comment type="similarity">
    <text evidence="1">Belongs to the universal ribosomal protein uL29 family.</text>
</comment>
<proteinExistence type="inferred from homology"/>
<keyword id="KW-0687">Ribonucleoprotein</keyword>
<keyword id="KW-0689">Ribosomal protein</keyword>
<sequence>MKANEIRDLATSEIELKVKSLKEELFNLRFQLATGQLENTARIREVRKAIARMKTVIREREISANN</sequence>
<reference key="1">
    <citation type="journal article" date="2008" name="J. Bacteriol.">
        <title>Complete genome sequence of the mosquitocidal bacterium Bacillus sphaericus C3-41 and comparison with those of closely related Bacillus species.</title>
        <authorList>
            <person name="Hu X."/>
            <person name="Fan W."/>
            <person name="Han B."/>
            <person name="Liu H."/>
            <person name="Zheng D."/>
            <person name="Li Q."/>
            <person name="Dong W."/>
            <person name="Yan J."/>
            <person name="Gao M."/>
            <person name="Berry C."/>
            <person name="Yuan Z."/>
        </authorList>
    </citation>
    <scope>NUCLEOTIDE SEQUENCE [LARGE SCALE GENOMIC DNA]</scope>
    <source>
        <strain>C3-41</strain>
    </source>
</reference>
<evidence type="ECO:0000255" key="1">
    <source>
        <dbReference type="HAMAP-Rule" id="MF_00374"/>
    </source>
</evidence>
<evidence type="ECO:0000305" key="2"/>
<feature type="chain" id="PRO_1000121786" description="Large ribosomal subunit protein uL29">
    <location>
        <begin position="1"/>
        <end position="66"/>
    </location>
</feature>
<protein>
    <recommendedName>
        <fullName evidence="1">Large ribosomal subunit protein uL29</fullName>
    </recommendedName>
    <alternativeName>
        <fullName evidence="2">50S ribosomal protein L29</fullName>
    </alternativeName>
</protein>
<organism>
    <name type="scientific">Lysinibacillus sphaericus (strain C3-41)</name>
    <dbReference type="NCBI Taxonomy" id="444177"/>
    <lineage>
        <taxon>Bacteria</taxon>
        <taxon>Bacillati</taxon>
        <taxon>Bacillota</taxon>
        <taxon>Bacilli</taxon>
        <taxon>Bacillales</taxon>
        <taxon>Bacillaceae</taxon>
        <taxon>Lysinibacillus</taxon>
    </lineage>
</organism>
<accession>B1HMX2</accession>
<gene>
    <name evidence="1" type="primary">rpmC</name>
    <name type="ordered locus">Bsph_4606</name>
</gene>